<keyword id="KW-0496">Mitochondrion</keyword>
<keyword id="KW-1185">Reference proteome</keyword>
<dbReference type="EMBL" id="Y08501">
    <property type="protein sequence ID" value="CAA69826.1"/>
    <property type="molecule type" value="Genomic_DNA"/>
</dbReference>
<dbReference type="EMBL" id="BK010421">
    <property type="status" value="NOT_ANNOTATED_CDS"/>
    <property type="molecule type" value="Genomic_DNA"/>
</dbReference>
<dbReference type="EMBL" id="AC007143">
    <property type="status" value="NOT_ANNOTATED_CDS"/>
    <property type="molecule type" value="Genomic_DNA"/>
</dbReference>
<dbReference type="EMBL" id="AC007730">
    <property type="status" value="NOT_ANNOTATED_CDS"/>
    <property type="molecule type" value="Genomic_DNA"/>
</dbReference>
<dbReference type="RefSeq" id="NP_085540.1">
    <property type="nucleotide sequence ID" value="NC_001284.2"/>
</dbReference>
<dbReference type="PaxDb" id="3702-ATMG00840.1"/>
<dbReference type="EnsemblPlants" id="ATMG00840.1">
    <property type="protein sequence ID" value="ATMG00840.1"/>
    <property type="gene ID" value="ATMG00840"/>
</dbReference>
<dbReference type="Gramene" id="ATMG00840.1">
    <property type="protein sequence ID" value="ATMG00840.1"/>
    <property type="gene ID" value="ATMG00840"/>
</dbReference>
<dbReference type="Araport" id="ATMG00840"/>
<dbReference type="TAIR" id="ATMG00840">
    <property type="gene designation" value="ORF121B"/>
</dbReference>
<dbReference type="HOGENOM" id="CLU_2041261_0_0_1"/>
<dbReference type="InParanoid" id="P92521"/>
<dbReference type="PRO" id="PR:P92521"/>
<dbReference type="Proteomes" id="UP000006548">
    <property type="component" value="Mitochondrion MT"/>
</dbReference>
<dbReference type="GO" id="GO:0005739">
    <property type="term" value="C:mitochondrion"/>
    <property type="evidence" value="ECO:0007669"/>
    <property type="project" value="UniProtKB-SubCell"/>
</dbReference>
<reference key="1">
    <citation type="journal article" date="1997" name="Nat. Genet.">
        <title>The mitochondrial genome of Arabidopsis thaliana contains 57 genes in 366,924 nucleotides.</title>
        <authorList>
            <person name="Unseld M."/>
            <person name="Marienfeld J.R."/>
            <person name="Brandt P."/>
            <person name="Brennicke A."/>
        </authorList>
    </citation>
    <scope>NUCLEOTIDE SEQUENCE [LARGE SCALE GENOMIC DNA]</scope>
    <source>
        <strain>cv. C24</strain>
    </source>
</reference>
<reference key="2">
    <citation type="journal article" date="2018" name="Plant Cell">
        <title>Correction of persistent errors in Arabidopsis reference mitochondrial genomes.</title>
        <authorList>
            <person name="Sloan D.B."/>
            <person name="Wu Z."/>
            <person name="Sharbrough J."/>
        </authorList>
    </citation>
    <scope>NUCLEOTIDE SEQUENCE [LARGE SCALE GENOMIC DNA]</scope>
    <source>
        <strain>cv. Columbia</strain>
    </source>
</reference>
<reference key="3">
    <citation type="journal article" date="1999" name="Nature">
        <title>Sequence and analysis of chromosome 2 of the plant Arabidopsis thaliana.</title>
        <authorList>
            <person name="Lin X."/>
            <person name="Kaul S."/>
            <person name="Rounsley S.D."/>
            <person name="Shea T.P."/>
            <person name="Benito M.-I."/>
            <person name="Town C.D."/>
            <person name="Fujii C.Y."/>
            <person name="Mason T.M."/>
            <person name="Bowman C.L."/>
            <person name="Barnstead M.E."/>
            <person name="Feldblyum T.V."/>
            <person name="Buell C.R."/>
            <person name="Ketchum K.A."/>
            <person name="Lee J.J."/>
            <person name="Ronning C.M."/>
            <person name="Koo H.L."/>
            <person name="Moffat K.S."/>
            <person name="Cronin L.A."/>
            <person name="Shen M."/>
            <person name="Pai G."/>
            <person name="Van Aken S."/>
            <person name="Umayam L."/>
            <person name="Tallon L.J."/>
            <person name="Gill J.E."/>
            <person name="Adams M.D."/>
            <person name="Carrera A.J."/>
            <person name="Creasy T.H."/>
            <person name="Goodman H.M."/>
            <person name="Somerville C.R."/>
            <person name="Copenhaver G.P."/>
            <person name="Preuss D."/>
            <person name="Nierman W.C."/>
            <person name="White O."/>
            <person name="Eisen J.A."/>
            <person name="Salzberg S.L."/>
            <person name="Fraser C.M."/>
            <person name="Venter J.C."/>
        </authorList>
    </citation>
    <scope>NUCLEOTIDE SEQUENCE [LARGE SCALE GENOMIC DNA] (AT2G07682)</scope>
    <source>
        <strain>cv. Columbia</strain>
    </source>
</reference>
<proteinExistence type="predicted"/>
<geneLocation type="mitochondrion"/>
<name>M840_ARATH</name>
<protein>
    <recommendedName>
        <fullName>Uncharacterized mitochondrial protein AtMg00840</fullName>
    </recommendedName>
    <alternativeName>
        <fullName>ORF121b</fullName>
    </alternativeName>
</protein>
<accession>P92521</accession>
<accession>Q1ZXZ1</accession>
<feature type="chain" id="PRO_0000196794" description="Uncharacterized mitochondrial protein AtMg00840">
    <location>
        <begin position="1"/>
        <end position="121"/>
    </location>
</feature>
<gene>
    <name type="ordered locus">AtMg00840</name>
</gene>
<sequence>MKLLVAPESIKTMTSCPAICPLILMDLSQLLNLPSTAKTTRVIPLLHPHLILLSFSLFQLHQPHPTHLLHPQPYTLILCPYICDQDSTCHHNENKAPCSFYPDQTVSGMVPFYVLGIGRAR</sequence>
<evidence type="ECO:0000305" key="1"/>
<comment type="subcellular location">
    <subcellularLocation>
        <location evidence="1">Mitochondrion</location>
    </subcellularLocation>
</comment>
<comment type="miscellaneous">
    <text>A stretch of 270 kb of the mitochondrial genome is duplicated within the centromere of chromosome 2 resulting in the duplication of the gene. The expression of the duplicated gene (At2g07682) is not demonstrated.</text>
</comment>
<comment type="sequence caution" evidence="1">
    <conflict type="frameshift">
        <sequence resource="EMBL" id="AC007143"/>
    </conflict>
</comment>
<comment type="sequence caution" evidence="1">
    <conflict type="frameshift">
        <sequence resource="EMBL" id="AC007730"/>
    </conflict>
</comment>
<organism>
    <name type="scientific">Arabidopsis thaliana</name>
    <name type="common">Mouse-ear cress</name>
    <dbReference type="NCBI Taxonomy" id="3702"/>
    <lineage>
        <taxon>Eukaryota</taxon>
        <taxon>Viridiplantae</taxon>
        <taxon>Streptophyta</taxon>
        <taxon>Embryophyta</taxon>
        <taxon>Tracheophyta</taxon>
        <taxon>Spermatophyta</taxon>
        <taxon>Magnoliopsida</taxon>
        <taxon>eudicotyledons</taxon>
        <taxon>Gunneridae</taxon>
        <taxon>Pentapetalae</taxon>
        <taxon>rosids</taxon>
        <taxon>malvids</taxon>
        <taxon>Brassicales</taxon>
        <taxon>Brassicaceae</taxon>
        <taxon>Camelineae</taxon>
        <taxon>Arabidopsis</taxon>
    </lineage>
</organism>